<comment type="subcellular location">
    <subcellularLocation>
        <location evidence="1">Cytoplasm</location>
    </subcellularLocation>
    <subcellularLocation>
        <location evidence="1">Nucleus</location>
    </subcellularLocation>
</comment>
<evidence type="ECO:0000269" key="1">
    <source>
    </source>
</evidence>
<sequence length="105" mass="12568">MCTFVFESLCAMISTLKVNKIERGYWFIQCLRYCFIYIIKKQHRQADLPRNFGMRSKALYIGRSVGKWIETFCLDSNYSTHVYSLWAKSFLIIQFENVDPFVDHF</sequence>
<gene>
    <name type="ORF">SPBC16G5.19</name>
</gene>
<protein>
    <recommendedName>
        <fullName>Uncharacterized protein C16G5.19</fullName>
    </recommendedName>
</protein>
<name>YH7J_SCHPO</name>
<keyword id="KW-0963">Cytoplasm</keyword>
<keyword id="KW-0539">Nucleus</keyword>
<keyword id="KW-1185">Reference proteome</keyword>
<accession>Q96VG0</accession>
<organism>
    <name type="scientific">Schizosaccharomyces pombe (strain 972 / ATCC 24843)</name>
    <name type="common">Fission yeast</name>
    <dbReference type="NCBI Taxonomy" id="284812"/>
    <lineage>
        <taxon>Eukaryota</taxon>
        <taxon>Fungi</taxon>
        <taxon>Dikarya</taxon>
        <taxon>Ascomycota</taxon>
        <taxon>Taphrinomycotina</taxon>
        <taxon>Schizosaccharomycetes</taxon>
        <taxon>Schizosaccharomycetales</taxon>
        <taxon>Schizosaccharomycetaceae</taxon>
        <taxon>Schizosaccharomyces</taxon>
    </lineage>
</organism>
<proteinExistence type="predicted"/>
<dbReference type="EMBL" id="CU329671">
    <property type="protein sequence ID" value="CAC41385.1"/>
    <property type="molecule type" value="Genomic_DNA"/>
</dbReference>
<dbReference type="RefSeq" id="NP_596768.1">
    <property type="nucleotide sequence ID" value="NM_001023788.1"/>
</dbReference>
<dbReference type="SMR" id="Q96VG0"/>
<dbReference type="STRING" id="284812.Q96VG0"/>
<dbReference type="PaxDb" id="4896-SPBC16G5.19.1"/>
<dbReference type="EnsemblFungi" id="SPBC16G5.19.1">
    <property type="protein sequence ID" value="SPBC16G5.19.1:pep"/>
    <property type="gene ID" value="SPBC16G5.19"/>
</dbReference>
<dbReference type="KEGG" id="spo:2540062"/>
<dbReference type="PomBase" id="SPBC16G5.19"/>
<dbReference type="VEuPathDB" id="FungiDB:SPBC16G5.19"/>
<dbReference type="HOGENOM" id="CLU_2238182_0_0_1"/>
<dbReference type="InParanoid" id="Q96VG0"/>
<dbReference type="PRO" id="PR:Q96VG0"/>
<dbReference type="Proteomes" id="UP000002485">
    <property type="component" value="Chromosome II"/>
</dbReference>
<dbReference type="GO" id="GO:0005829">
    <property type="term" value="C:cytosol"/>
    <property type="evidence" value="ECO:0007005"/>
    <property type="project" value="PomBase"/>
</dbReference>
<dbReference type="GO" id="GO:0005634">
    <property type="term" value="C:nucleus"/>
    <property type="evidence" value="ECO:0007005"/>
    <property type="project" value="PomBase"/>
</dbReference>
<reference key="1">
    <citation type="journal article" date="2002" name="Nature">
        <title>The genome sequence of Schizosaccharomyces pombe.</title>
        <authorList>
            <person name="Wood V."/>
            <person name="Gwilliam R."/>
            <person name="Rajandream M.A."/>
            <person name="Lyne M.H."/>
            <person name="Lyne R."/>
            <person name="Stewart A."/>
            <person name="Sgouros J.G."/>
            <person name="Peat N."/>
            <person name="Hayles J."/>
            <person name="Baker S.G."/>
            <person name="Basham D."/>
            <person name="Bowman S."/>
            <person name="Brooks K."/>
            <person name="Brown D."/>
            <person name="Brown S."/>
            <person name="Chillingworth T."/>
            <person name="Churcher C.M."/>
            <person name="Collins M."/>
            <person name="Connor R."/>
            <person name="Cronin A."/>
            <person name="Davis P."/>
            <person name="Feltwell T."/>
            <person name="Fraser A."/>
            <person name="Gentles S."/>
            <person name="Goble A."/>
            <person name="Hamlin N."/>
            <person name="Harris D.E."/>
            <person name="Hidalgo J."/>
            <person name="Hodgson G."/>
            <person name="Holroyd S."/>
            <person name="Hornsby T."/>
            <person name="Howarth S."/>
            <person name="Huckle E.J."/>
            <person name="Hunt S."/>
            <person name="Jagels K."/>
            <person name="James K.D."/>
            <person name="Jones L."/>
            <person name="Jones M."/>
            <person name="Leather S."/>
            <person name="McDonald S."/>
            <person name="McLean J."/>
            <person name="Mooney P."/>
            <person name="Moule S."/>
            <person name="Mungall K.L."/>
            <person name="Murphy L.D."/>
            <person name="Niblett D."/>
            <person name="Odell C."/>
            <person name="Oliver K."/>
            <person name="O'Neil S."/>
            <person name="Pearson D."/>
            <person name="Quail M.A."/>
            <person name="Rabbinowitsch E."/>
            <person name="Rutherford K.M."/>
            <person name="Rutter S."/>
            <person name="Saunders D."/>
            <person name="Seeger K."/>
            <person name="Sharp S."/>
            <person name="Skelton J."/>
            <person name="Simmonds M.N."/>
            <person name="Squares R."/>
            <person name="Squares S."/>
            <person name="Stevens K."/>
            <person name="Taylor K."/>
            <person name="Taylor R.G."/>
            <person name="Tivey A."/>
            <person name="Walsh S.V."/>
            <person name="Warren T."/>
            <person name="Whitehead S."/>
            <person name="Woodward J.R."/>
            <person name="Volckaert G."/>
            <person name="Aert R."/>
            <person name="Robben J."/>
            <person name="Grymonprez B."/>
            <person name="Weltjens I."/>
            <person name="Vanstreels E."/>
            <person name="Rieger M."/>
            <person name="Schaefer M."/>
            <person name="Mueller-Auer S."/>
            <person name="Gabel C."/>
            <person name="Fuchs M."/>
            <person name="Duesterhoeft A."/>
            <person name="Fritzc C."/>
            <person name="Holzer E."/>
            <person name="Moestl D."/>
            <person name="Hilbert H."/>
            <person name="Borzym K."/>
            <person name="Langer I."/>
            <person name="Beck A."/>
            <person name="Lehrach H."/>
            <person name="Reinhardt R."/>
            <person name="Pohl T.M."/>
            <person name="Eger P."/>
            <person name="Zimmermann W."/>
            <person name="Wedler H."/>
            <person name="Wambutt R."/>
            <person name="Purnelle B."/>
            <person name="Goffeau A."/>
            <person name="Cadieu E."/>
            <person name="Dreano S."/>
            <person name="Gloux S."/>
            <person name="Lelaure V."/>
            <person name="Mottier S."/>
            <person name="Galibert F."/>
            <person name="Aves S.J."/>
            <person name="Xiang Z."/>
            <person name="Hunt C."/>
            <person name="Moore K."/>
            <person name="Hurst S.M."/>
            <person name="Lucas M."/>
            <person name="Rochet M."/>
            <person name="Gaillardin C."/>
            <person name="Tallada V.A."/>
            <person name="Garzon A."/>
            <person name="Thode G."/>
            <person name="Daga R.R."/>
            <person name="Cruzado L."/>
            <person name="Jimenez J."/>
            <person name="Sanchez M."/>
            <person name="del Rey F."/>
            <person name="Benito J."/>
            <person name="Dominguez A."/>
            <person name="Revuelta J.L."/>
            <person name="Moreno S."/>
            <person name="Armstrong J."/>
            <person name="Forsburg S.L."/>
            <person name="Cerutti L."/>
            <person name="Lowe T."/>
            <person name="McCombie W.R."/>
            <person name="Paulsen I."/>
            <person name="Potashkin J."/>
            <person name="Shpakovski G.V."/>
            <person name="Ussery D."/>
            <person name="Barrell B.G."/>
            <person name="Nurse P."/>
        </authorList>
    </citation>
    <scope>NUCLEOTIDE SEQUENCE [LARGE SCALE GENOMIC DNA]</scope>
    <source>
        <strain>972 / ATCC 24843</strain>
    </source>
</reference>
<reference key="2">
    <citation type="journal article" date="2006" name="Nat. Biotechnol.">
        <title>ORFeome cloning and global analysis of protein localization in the fission yeast Schizosaccharomyces pombe.</title>
        <authorList>
            <person name="Matsuyama A."/>
            <person name="Arai R."/>
            <person name="Yashiroda Y."/>
            <person name="Shirai A."/>
            <person name="Kamata A."/>
            <person name="Sekido S."/>
            <person name="Kobayashi Y."/>
            <person name="Hashimoto A."/>
            <person name="Hamamoto M."/>
            <person name="Hiraoka Y."/>
            <person name="Horinouchi S."/>
            <person name="Yoshida M."/>
        </authorList>
    </citation>
    <scope>SUBCELLULAR LOCATION [LARGE SCALE ANALYSIS]</scope>
</reference>
<feature type="chain" id="PRO_0000304088" description="Uncharacterized protein C16G5.19">
    <location>
        <begin position="1"/>
        <end position="105"/>
    </location>
</feature>